<dbReference type="EC" id="4.2.99.22"/>
<dbReference type="EMBL" id="AB749808">
    <property type="protein sequence ID" value="BAN28567.1"/>
    <property type="molecule type" value="mRNA"/>
</dbReference>
<dbReference type="SMR" id="R4X5P0"/>
<dbReference type="ESTHER" id="tulge-tcab3">
    <property type="family name" value="Plant_carboxylesterase"/>
</dbReference>
<dbReference type="GO" id="GO:0009501">
    <property type="term" value="C:amyloplast"/>
    <property type="evidence" value="ECO:0007669"/>
    <property type="project" value="UniProtKB-SubCell"/>
</dbReference>
<dbReference type="GO" id="GO:0016787">
    <property type="term" value="F:hydrolase activity"/>
    <property type="evidence" value="ECO:0007669"/>
    <property type="project" value="InterPro"/>
</dbReference>
<dbReference type="GO" id="GO:0016829">
    <property type="term" value="F:lyase activity"/>
    <property type="evidence" value="ECO:0007669"/>
    <property type="project" value="UniProtKB-KW"/>
</dbReference>
<dbReference type="GO" id="GO:0006952">
    <property type="term" value="P:defense response"/>
    <property type="evidence" value="ECO:0007669"/>
    <property type="project" value="UniProtKB-KW"/>
</dbReference>
<dbReference type="Gene3D" id="3.40.50.1820">
    <property type="entry name" value="alpha/beta hydrolase"/>
    <property type="match status" value="1"/>
</dbReference>
<dbReference type="InterPro" id="IPR013094">
    <property type="entry name" value="AB_hydrolase_3"/>
</dbReference>
<dbReference type="InterPro" id="IPR029058">
    <property type="entry name" value="AB_hydrolase_fold"/>
</dbReference>
<dbReference type="InterPro" id="IPR050466">
    <property type="entry name" value="Carboxylest/Gibb_receptor"/>
</dbReference>
<dbReference type="PANTHER" id="PTHR23024">
    <property type="entry name" value="ARYLACETAMIDE DEACETYLASE"/>
    <property type="match status" value="1"/>
</dbReference>
<dbReference type="PANTHER" id="PTHR23024:SF577">
    <property type="entry name" value="CARBOXYLESTERASE 2-RELATED"/>
    <property type="match status" value="1"/>
</dbReference>
<dbReference type="Pfam" id="PF07859">
    <property type="entry name" value="Abhydrolase_3"/>
    <property type="match status" value="1"/>
</dbReference>
<dbReference type="SUPFAM" id="SSF53474">
    <property type="entry name" value="alpha/beta-Hydrolases"/>
    <property type="match status" value="1"/>
</dbReference>
<reference key="1">
    <citation type="journal article" date="2013" name="Biosci. Biotechnol. Biochem.">
        <title>Molecular diversity of tuliposide A-converting enzyme in the tulip.</title>
        <authorList>
            <person name="Nomura T."/>
            <person name="Tsuchigami A."/>
            <person name="Ogita S."/>
            <person name="Kato Y."/>
        </authorList>
    </citation>
    <scope>NUCLEOTIDE SEQUENCE [GENOMIC DNA / MRNA]</scope>
    <scope>PROTEIN SEQUENCE OF N-TERMINUS</scope>
    <scope>SUBUNIT</scope>
    <scope>BIOPHYSICOCHEMICAL PROPERTIES</scope>
    <scope>TISSUE SPECIFICITY</scope>
    <source>
        <tissue>Bulb</tissue>
    </source>
</reference>
<proteinExistence type="evidence at protein level"/>
<sequence>MSAALFCGPPPAVSFGCKDGRGRKGMVRSKDIVRQTVKPPAHACRLIGWNKYPGSVVPTNSSLSPSPTALDDDIELDLSPFLIIYKDGRIERLKGTTVIPACPEVATKDVIIDPATGVSVRLYLPNVVDLPSKKLPVLVYFHGGGFVIENTGSPNYHNYLTLLAAKSGLLIVSVNYRLAPEHPIPASFDDCMAGFNWVVSHSAGPAPEPWLARHGDLTQILISGDSAGGTVTHYVLLRADAGVIEGAALVHPYFLGSKRLENQTEEDFEFHEKLWRLSTPNTEGLDDPLINPLAPGAPSLAGLKCKRAVVFVAELDFLVERGRMYYDALVKSGWGGEAELVHQEGVGHVFHLSDYSGDVSVDMMAKMVAFLRGE</sequence>
<name>TCAB3_TULGE</name>
<gene>
    <name type="primary">TCEA-B3</name>
</gene>
<evidence type="ECO:0000250" key="1"/>
<evidence type="ECO:0000269" key="2">
    <source>
    </source>
</evidence>
<evidence type="ECO:0000305" key="3"/>
<evidence type="ECO:0000305" key="4">
    <source>
    </source>
</evidence>
<feature type="transit peptide" description="Amyloplast" evidence="2">
    <location>
        <begin position="1"/>
        <end position="68"/>
    </location>
</feature>
<feature type="chain" id="PRO_0000423869" description="Tuliposide A-converting enzyme b3, amyloplastic">
    <location>
        <begin position="69"/>
        <end position="374"/>
    </location>
</feature>
<feature type="active site" description="Acyl-ester intermediate" evidence="1">
    <location>
        <position position="226"/>
    </location>
</feature>
<feature type="active site" description="Charge relay system" evidence="1">
    <location>
        <position position="316"/>
    </location>
</feature>
<feature type="active site" description="Charge relay system" evidence="1">
    <location>
        <position position="348"/>
    </location>
</feature>
<protein>
    <recommendedName>
        <fullName>Tuliposide A-converting enzyme b3, amyloplastic</fullName>
        <shortName>TgTCEA-b3</shortName>
        <ecNumber>4.2.99.22</ecNumber>
    </recommendedName>
</protein>
<keyword id="KW-0035">Amyloplast</keyword>
<keyword id="KW-0903">Direct protein sequencing</keyword>
<keyword id="KW-0456">Lyase</keyword>
<keyword id="KW-0611">Plant defense</keyword>
<keyword id="KW-0934">Plastid</keyword>
<keyword id="KW-0809">Transit peptide</keyword>
<comment type="function">
    <text>Lactone-forming carboxylesterases, specifically catalyzing intramolecular transesterification, but not hydrolysis. Involved in the biosynthesis of tulipalins, defensive chemicals that show antimicrobial activities against a broad range of strains of bacteria and fungi. Substrates are 6-tuliposide A &gt; 6-tuliposide B.</text>
</comment>
<comment type="catalytic activity">
    <reaction>
        <text>6-tuliposide A = tulipalin A + D-glucose</text>
        <dbReference type="Rhea" id="RHEA:36071"/>
        <dbReference type="ChEBI" id="CHEBI:4167"/>
        <dbReference type="ChEBI" id="CHEBI:72781"/>
        <dbReference type="ChEBI" id="CHEBI:104120"/>
        <dbReference type="EC" id="4.2.99.22"/>
    </reaction>
</comment>
<comment type="biophysicochemical properties">
    <kinetics>
        <KM evidence="2">21 mM for 6-tuliposide A</KM>
        <KM evidence="2">51 mM for 6-tuliposide B</KM>
        <text>kcat is 3200 sec(-1) with 6-tuliposide A as substrate. kcat is 720 sec(-1) with 6-tuliposide B as substrate.</text>
    </kinetics>
</comment>
<comment type="subunit">
    <text evidence="2">Homodimer.</text>
</comment>
<comment type="subcellular location">
    <subcellularLocation>
        <location evidence="1">Plastid</location>
        <location evidence="1">Amyloplast</location>
    </subcellularLocation>
</comment>
<comment type="tissue specificity">
    <text evidence="2">Highly expressed in pistil and bulb scales. Lower expression in stem, and barely detected in root, leaf, petal and stamen.</text>
</comment>
<comment type="miscellaneous">
    <text evidence="4">6-tuliposide A and tuliposide A-converting enzyme, which are compartmentalized in the vacuoles and plastids respectively, come into contact with each other for the enzyme reaction releasing toxic tulipalin A upon cell disruption by pathogen infection or herbivore predation.</text>
</comment>
<comment type="similarity">
    <text evidence="3">Belongs to the AB hydrolase superfamily.</text>
</comment>
<accession>R4X5P0</accession>
<organism>
    <name type="scientific">Tulipa gesneriana</name>
    <name type="common">Garden tulip</name>
    <dbReference type="NCBI Taxonomy" id="13306"/>
    <lineage>
        <taxon>Eukaryota</taxon>
        <taxon>Viridiplantae</taxon>
        <taxon>Streptophyta</taxon>
        <taxon>Embryophyta</taxon>
        <taxon>Tracheophyta</taxon>
        <taxon>Spermatophyta</taxon>
        <taxon>Magnoliopsida</taxon>
        <taxon>Liliopsida</taxon>
        <taxon>Liliales</taxon>
        <taxon>Liliaceae</taxon>
        <taxon>Tulipa</taxon>
    </lineage>
</organism>